<dbReference type="EMBL" id="AK020018">
    <property type="protein sequence ID" value="BAB31968.1"/>
    <property type="molecule type" value="mRNA"/>
</dbReference>
<dbReference type="EMBL" id="BC048149">
    <property type="protein sequence ID" value="AAH48149.1"/>
    <property type="molecule type" value="mRNA"/>
</dbReference>
<dbReference type="CCDS" id="CCDS49471.1">
    <molecule id="Q80XI1-1"/>
</dbReference>
<dbReference type="RefSeq" id="NP_001139557.1">
    <molecule id="Q80XI1-1"/>
    <property type="nucleotide sequence ID" value="NM_001146085.1"/>
</dbReference>
<dbReference type="RefSeq" id="NP_001139558.1">
    <molecule id="Q80XI1-1"/>
    <property type="nucleotide sequence ID" value="NM_001146086.1"/>
</dbReference>
<dbReference type="RefSeq" id="NP_084512.2">
    <property type="nucleotide sequence ID" value="NM_030236.3"/>
</dbReference>
<dbReference type="RefSeq" id="XP_006519776.1">
    <molecule id="Q80XI1-1"/>
    <property type="nucleotide sequence ID" value="XM_006519713.2"/>
</dbReference>
<dbReference type="RefSeq" id="XP_006519777.1">
    <molecule id="Q80XI1-1"/>
    <property type="nucleotide sequence ID" value="XM_006519714.1"/>
</dbReference>
<dbReference type="RefSeq" id="XP_006519780.1">
    <molecule id="Q80XI1-1"/>
    <property type="nucleotide sequence ID" value="XM_006519717.3"/>
</dbReference>
<dbReference type="RefSeq" id="XP_006519781.1">
    <molecule id="Q80XI1-1"/>
    <property type="nucleotide sequence ID" value="XM_006519718.4"/>
</dbReference>
<dbReference type="RefSeq" id="XP_006519782.1">
    <molecule id="Q80XI1-1"/>
    <property type="nucleotide sequence ID" value="XM_006519719.2"/>
</dbReference>
<dbReference type="RefSeq" id="XP_006519783.1">
    <molecule id="Q80XI1-1"/>
    <property type="nucleotide sequence ID" value="XM_006519720.1"/>
</dbReference>
<dbReference type="RefSeq" id="XP_006519785.1">
    <molecule id="Q80XI1-1"/>
    <property type="nucleotide sequence ID" value="XM_006519722.1"/>
</dbReference>
<dbReference type="RefSeq" id="XP_006519786.1">
    <property type="nucleotide sequence ID" value="XM_006519723.3"/>
</dbReference>
<dbReference type="RefSeq" id="XP_017171714.1">
    <molecule id="Q80XI1-1"/>
    <property type="nucleotide sequence ID" value="XM_017316225.3"/>
</dbReference>
<dbReference type="RefSeq" id="XP_017171715.1">
    <property type="nucleotide sequence ID" value="XM_017316226.1"/>
</dbReference>
<dbReference type="RefSeq" id="XP_030103957.1">
    <molecule id="Q80XI1-1"/>
    <property type="nucleotide sequence ID" value="XM_030248097.2"/>
</dbReference>
<dbReference type="RefSeq" id="XP_036014809.1">
    <molecule id="Q80XI1-1"/>
    <property type="nucleotide sequence ID" value="XM_036158916.1"/>
</dbReference>
<dbReference type="RefSeq" id="XP_036014810.1">
    <molecule id="Q80XI1-1"/>
    <property type="nucleotide sequence ID" value="XM_036158917.1"/>
</dbReference>
<dbReference type="RefSeq" id="XP_036014811.1">
    <molecule id="Q80XI1-1"/>
    <property type="nucleotide sequence ID" value="XM_036158918.1"/>
</dbReference>
<dbReference type="RefSeq" id="XP_036014812.1">
    <molecule id="Q80XI1-1"/>
    <property type="nucleotide sequence ID" value="XM_036158919.1"/>
</dbReference>
<dbReference type="BioGRID" id="219722">
    <property type="interactions" value="4"/>
</dbReference>
<dbReference type="FunCoup" id="Q80XI1">
    <property type="interactions" value="1122"/>
</dbReference>
<dbReference type="STRING" id="10090.ENSMUSP00000044675"/>
<dbReference type="iPTMnet" id="Q80XI1"/>
<dbReference type="PhosphoSitePlus" id="Q80XI1"/>
<dbReference type="jPOST" id="Q80XI1"/>
<dbReference type="PaxDb" id="10090-ENSMUSP00000044675"/>
<dbReference type="ProteomicsDB" id="272966">
    <molecule id="Q80XI1-1"/>
</dbReference>
<dbReference type="ProteomicsDB" id="272967">
    <molecule id="Q80XI1-2"/>
</dbReference>
<dbReference type="Antibodypedia" id="24028">
    <property type="antibodies" value="99 antibodies from 17 providers"/>
</dbReference>
<dbReference type="Ensembl" id="ENSMUST00000095941.9">
    <molecule id="Q80XI1-1"/>
    <property type="protein sequence ID" value="ENSMUSP00000093634.3"/>
    <property type="gene ID" value="ENSMUSG00000037536.15"/>
</dbReference>
<dbReference type="Ensembl" id="ENSMUST00000163324.8">
    <molecule id="Q80XI1-1"/>
    <property type="protein sequence ID" value="ENSMUSP00000131708.2"/>
    <property type="gene ID" value="ENSMUSG00000037536.15"/>
</dbReference>
<dbReference type="Ensembl" id="ENSMUST00000165714.2">
    <molecule id="Q80XI1-1"/>
    <property type="protein sequence ID" value="ENSMUSP00000130036.2"/>
    <property type="gene ID" value="ENSMUSG00000037536.15"/>
</dbReference>
<dbReference type="Ensembl" id="ENSMUST00000168833.9">
    <molecule id="Q80XI1-1"/>
    <property type="protein sequence ID" value="ENSMUSP00000132271.2"/>
    <property type="gene ID" value="ENSMUSG00000037536.15"/>
</dbReference>
<dbReference type="GeneID" id="78938"/>
<dbReference type="KEGG" id="mmu:78938"/>
<dbReference type="UCSC" id="uc007tih.2">
    <molecule id="Q80XI1-1"/>
    <property type="organism name" value="mouse"/>
</dbReference>
<dbReference type="AGR" id="MGI:1926188"/>
<dbReference type="CTD" id="55030"/>
<dbReference type="MGI" id="MGI:1926188">
    <property type="gene designation" value="Fbxo34"/>
</dbReference>
<dbReference type="VEuPathDB" id="HostDB:ENSMUSG00000037536"/>
<dbReference type="eggNOG" id="ENOG502QRQQ">
    <property type="taxonomic scope" value="Eukaryota"/>
</dbReference>
<dbReference type="GeneTree" id="ENSGT00530000064222"/>
<dbReference type="HOGENOM" id="CLU_418530_0_0_1"/>
<dbReference type="InParanoid" id="Q80XI1"/>
<dbReference type="OMA" id="MKNSNRY"/>
<dbReference type="OrthoDB" id="10052741at2759"/>
<dbReference type="PhylomeDB" id="Q80XI1"/>
<dbReference type="BioGRID-ORCS" id="78938">
    <property type="hits" value="4 hits in 78 CRISPR screens"/>
</dbReference>
<dbReference type="ChiTaRS" id="Fbxo34">
    <property type="organism name" value="mouse"/>
</dbReference>
<dbReference type="PRO" id="PR:Q80XI1"/>
<dbReference type="Proteomes" id="UP000000589">
    <property type="component" value="Chromosome 14"/>
</dbReference>
<dbReference type="RNAct" id="Q80XI1">
    <property type="molecule type" value="protein"/>
</dbReference>
<dbReference type="Bgee" id="ENSMUSG00000037536">
    <property type="expression patterns" value="Expressed in animal zygote and 221 other cell types or tissues"/>
</dbReference>
<dbReference type="ExpressionAtlas" id="Q80XI1">
    <property type="expression patterns" value="baseline and differential"/>
</dbReference>
<dbReference type="Gene3D" id="1.20.1280.50">
    <property type="match status" value="1"/>
</dbReference>
<dbReference type="InterPro" id="IPR036047">
    <property type="entry name" value="F-box-like_dom_sf"/>
</dbReference>
<dbReference type="InterPro" id="IPR001810">
    <property type="entry name" value="F-box_dom"/>
</dbReference>
<dbReference type="InterPro" id="IPR039594">
    <property type="entry name" value="FBXO34/46"/>
</dbReference>
<dbReference type="PANTHER" id="PTHR16271:SF11">
    <property type="entry name" value="F-BOX ONLY PROTEIN 34"/>
    <property type="match status" value="1"/>
</dbReference>
<dbReference type="PANTHER" id="PTHR16271">
    <property type="entry name" value="F-BOX ONLY PROTEIN 34/46 FAMILY MEMBER"/>
    <property type="match status" value="1"/>
</dbReference>
<dbReference type="Pfam" id="PF00646">
    <property type="entry name" value="F-box"/>
    <property type="match status" value="1"/>
</dbReference>
<dbReference type="SMART" id="SM00256">
    <property type="entry name" value="FBOX"/>
    <property type="match status" value="1"/>
</dbReference>
<dbReference type="SUPFAM" id="SSF81383">
    <property type="entry name" value="F-box domain"/>
    <property type="match status" value="1"/>
</dbReference>
<dbReference type="PROSITE" id="PS50181">
    <property type="entry name" value="FBOX"/>
    <property type="match status" value="1"/>
</dbReference>
<organism>
    <name type="scientific">Mus musculus</name>
    <name type="common">Mouse</name>
    <dbReference type="NCBI Taxonomy" id="10090"/>
    <lineage>
        <taxon>Eukaryota</taxon>
        <taxon>Metazoa</taxon>
        <taxon>Chordata</taxon>
        <taxon>Craniata</taxon>
        <taxon>Vertebrata</taxon>
        <taxon>Euteleostomi</taxon>
        <taxon>Mammalia</taxon>
        <taxon>Eutheria</taxon>
        <taxon>Euarchontoglires</taxon>
        <taxon>Glires</taxon>
        <taxon>Rodentia</taxon>
        <taxon>Myomorpha</taxon>
        <taxon>Muroidea</taxon>
        <taxon>Muridae</taxon>
        <taxon>Murinae</taxon>
        <taxon>Mus</taxon>
        <taxon>Mus</taxon>
    </lineage>
</organism>
<comment type="function">
    <text evidence="1">Substrate-recognition component of the SCF (SKP1-CUL1-F-box protein)-type E3 ubiquitin ligase complex.</text>
</comment>
<comment type="subunit">
    <text evidence="1">Directly interacts with SKP1 and CUL1.</text>
</comment>
<comment type="alternative products">
    <event type="alternative splicing"/>
    <isoform>
        <id>Q80XI1-1</id>
        <name>1</name>
        <sequence type="displayed"/>
    </isoform>
    <isoform>
        <id>Q80XI1-2</id>
        <name>2</name>
        <sequence type="described" ref="VSP_013055"/>
    </isoform>
</comment>
<keyword id="KW-0025">Alternative splicing</keyword>
<keyword id="KW-1185">Reference proteome</keyword>
<keyword id="KW-0833">Ubl conjugation pathway</keyword>
<protein>
    <recommendedName>
        <fullName>F-box only protein 34</fullName>
    </recommendedName>
</protein>
<name>FBX34_MOUSE</name>
<sequence length="695" mass="77138">MHLKLYWKLQKKERPLEVSRDTLRTPMSHGKANGDVKARASYMKPTVLPSASLVKASSRKPFGILSPNVLCSMSGKSPVENSLNVKAKKNVLSAAVHQSEEGLPGTWAIVKPGNTKEKIAFFAAHQYSNRIGSMKIKSSWDIDGRATKRRKKSGDLKKAKLQLEMMREINSQCYQSEPFVCGVEHCSVHYMSDSGDGVCAARPLSVIQMVAFLEQKATALLASCTKNCTNSPAIVKISGQSRGIPPAPEPFSAPETCEEPKEQENPETGRSQGEPVRVLDMVARLESECLKHQGQREPGSLSRNNSFRRNVGRVLLTNGSQASDKSEEGSADTADPQENPLQPVSVGEEPSVTEHHSVGEQAWDGTSQSCPSLPATVSFHMDSTDLEPGQQTAMKSCSRDDVEMVEEFDELPTDAVRRIRRELVTVTKHSPEQRQDPLCISITVCTVEKDRPAALDSLEEPLPGMLFFLSSGQDQQAHPQLREHPAPEASEASQPQDAAEGSSAGEEKDASVEPLLPAASPGGSTSQVLEAATCKKQVSQDFLETRFKIQQLLEPQQYMACLPHHIIVKIFRLLPTLSLAILKCTCRYFKSIIEYYNIRPADSRWVRDPRYREDPCKQCKKKYVKGDVSLCRWHPKPYCQALPYGPGYWMCCHQSQKGFPGCKLGLHDNHWLPACHSFNRAIHKKTRGSETEEEY</sequence>
<reference key="1">
    <citation type="journal article" date="2005" name="Science">
        <title>The transcriptional landscape of the mammalian genome.</title>
        <authorList>
            <person name="Carninci P."/>
            <person name="Kasukawa T."/>
            <person name="Katayama S."/>
            <person name="Gough J."/>
            <person name="Frith M.C."/>
            <person name="Maeda N."/>
            <person name="Oyama R."/>
            <person name="Ravasi T."/>
            <person name="Lenhard B."/>
            <person name="Wells C."/>
            <person name="Kodzius R."/>
            <person name="Shimokawa K."/>
            <person name="Bajic V.B."/>
            <person name="Brenner S.E."/>
            <person name="Batalov S."/>
            <person name="Forrest A.R."/>
            <person name="Zavolan M."/>
            <person name="Davis M.J."/>
            <person name="Wilming L.G."/>
            <person name="Aidinis V."/>
            <person name="Allen J.E."/>
            <person name="Ambesi-Impiombato A."/>
            <person name="Apweiler R."/>
            <person name="Aturaliya R.N."/>
            <person name="Bailey T.L."/>
            <person name="Bansal M."/>
            <person name="Baxter L."/>
            <person name="Beisel K.W."/>
            <person name="Bersano T."/>
            <person name="Bono H."/>
            <person name="Chalk A.M."/>
            <person name="Chiu K.P."/>
            <person name="Choudhary V."/>
            <person name="Christoffels A."/>
            <person name="Clutterbuck D.R."/>
            <person name="Crowe M.L."/>
            <person name="Dalla E."/>
            <person name="Dalrymple B.P."/>
            <person name="de Bono B."/>
            <person name="Della Gatta G."/>
            <person name="di Bernardo D."/>
            <person name="Down T."/>
            <person name="Engstrom P."/>
            <person name="Fagiolini M."/>
            <person name="Faulkner G."/>
            <person name="Fletcher C.F."/>
            <person name="Fukushima T."/>
            <person name="Furuno M."/>
            <person name="Futaki S."/>
            <person name="Gariboldi M."/>
            <person name="Georgii-Hemming P."/>
            <person name="Gingeras T.R."/>
            <person name="Gojobori T."/>
            <person name="Green R.E."/>
            <person name="Gustincich S."/>
            <person name="Harbers M."/>
            <person name="Hayashi Y."/>
            <person name="Hensch T.K."/>
            <person name="Hirokawa N."/>
            <person name="Hill D."/>
            <person name="Huminiecki L."/>
            <person name="Iacono M."/>
            <person name="Ikeo K."/>
            <person name="Iwama A."/>
            <person name="Ishikawa T."/>
            <person name="Jakt M."/>
            <person name="Kanapin A."/>
            <person name="Katoh M."/>
            <person name="Kawasawa Y."/>
            <person name="Kelso J."/>
            <person name="Kitamura H."/>
            <person name="Kitano H."/>
            <person name="Kollias G."/>
            <person name="Krishnan S.P."/>
            <person name="Kruger A."/>
            <person name="Kummerfeld S.K."/>
            <person name="Kurochkin I.V."/>
            <person name="Lareau L.F."/>
            <person name="Lazarevic D."/>
            <person name="Lipovich L."/>
            <person name="Liu J."/>
            <person name="Liuni S."/>
            <person name="McWilliam S."/>
            <person name="Madan Babu M."/>
            <person name="Madera M."/>
            <person name="Marchionni L."/>
            <person name="Matsuda H."/>
            <person name="Matsuzawa S."/>
            <person name="Miki H."/>
            <person name="Mignone F."/>
            <person name="Miyake S."/>
            <person name="Morris K."/>
            <person name="Mottagui-Tabar S."/>
            <person name="Mulder N."/>
            <person name="Nakano N."/>
            <person name="Nakauchi H."/>
            <person name="Ng P."/>
            <person name="Nilsson R."/>
            <person name="Nishiguchi S."/>
            <person name="Nishikawa S."/>
            <person name="Nori F."/>
            <person name="Ohara O."/>
            <person name="Okazaki Y."/>
            <person name="Orlando V."/>
            <person name="Pang K.C."/>
            <person name="Pavan W.J."/>
            <person name="Pavesi G."/>
            <person name="Pesole G."/>
            <person name="Petrovsky N."/>
            <person name="Piazza S."/>
            <person name="Reed J."/>
            <person name="Reid J.F."/>
            <person name="Ring B.Z."/>
            <person name="Ringwald M."/>
            <person name="Rost B."/>
            <person name="Ruan Y."/>
            <person name="Salzberg S.L."/>
            <person name="Sandelin A."/>
            <person name="Schneider C."/>
            <person name="Schoenbach C."/>
            <person name="Sekiguchi K."/>
            <person name="Semple C.A."/>
            <person name="Seno S."/>
            <person name="Sessa L."/>
            <person name="Sheng Y."/>
            <person name="Shibata Y."/>
            <person name="Shimada H."/>
            <person name="Shimada K."/>
            <person name="Silva D."/>
            <person name="Sinclair B."/>
            <person name="Sperling S."/>
            <person name="Stupka E."/>
            <person name="Sugiura K."/>
            <person name="Sultana R."/>
            <person name="Takenaka Y."/>
            <person name="Taki K."/>
            <person name="Tammoja K."/>
            <person name="Tan S.L."/>
            <person name="Tang S."/>
            <person name="Taylor M.S."/>
            <person name="Tegner J."/>
            <person name="Teichmann S.A."/>
            <person name="Ueda H.R."/>
            <person name="van Nimwegen E."/>
            <person name="Verardo R."/>
            <person name="Wei C.L."/>
            <person name="Yagi K."/>
            <person name="Yamanishi H."/>
            <person name="Zabarovsky E."/>
            <person name="Zhu S."/>
            <person name="Zimmer A."/>
            <person name="Hide W."/>
            <person name="Bult C."/>
            <person name="Grimmond S.M."/>
            <person name="Teasdale R.D."/>
            <person name="Liu E.T."/>
            <person name="Brusic V."/>
            <person name="Quackenbush J."/>
            <person name="Wahlestedt C."/>
            <person name="Mattick J.S."/>
            <person name="Hume D.A."/>
            <person name="Kai C."/>
            <person name="Sasaki D."/>
            <person name="Tomaru Y."/>
            <person name="Fukuda S."/>
            <person name="Kanamori-Katayama M."/>
            <person name="Suzuki M."/>
            <person name="Aoki J."/>
            <person name="Arakawa T."/>
            <person name="Iida J."/>
            <person name="Imamura K."/>
            <person name="Itoh M."/>
            <person name="Kato T."/>
            <person name="Kawaji H."/>
            <person name="Kawagashira N."/>
            <person name="Kawashima T."/>
            <person name="Kojima M."/>
            <person name="Kondo S."/>
            <person name="Konno H."/>
            <person name="Nakano K."/>
            <person name="Ninomiya N."/>
            <person name="Nishio T."/>
            <person name="Okada M."/>
            <person name="Plessy C."/>
            <person name="Shibata K."/>
            <person name="Shiraki T."/>
            <person name="Suzuki S."/>
            <person name="Tagami M."/>
            <person name="Waki K."/>
            <person name="Watahiki A."/>
            <person name="Okamura-Oho Y."/>
            <person name="Suzuki H."/>
            <person name="Kawai J."/>
            <person name="Hayashizaki Y."/>
        </authorList>
    </citation>
    <scope>NUCLEOTIDE SEQUENCE [LARGE SCALE MRNA] (ISOFORM 2)</scope>
    <source>
        <strain>C57BL/6J</strain>
        <tissue>Thymus</tissue>
    </source>
</reference>
<reference key="2">
    <citation type="journal article" date="2004" name="Genome Res.">
        <title>The status, quality, and expansion of the NIH full-length cDNA project: the Mammalian Gene Collection (MGC).</title>
        <authorList>
            <consortium name="The MGC Project Team"/>
        </authorList>
    </citation>
    <scope>NUCLEOTIDE SEQUENCE [LARGE SCALE MRNA] (ISOFORM 1)</scope>
    <source>
        <strain>C57BL/6J</strain>
        <tissue>Brain</tissue>
    </source>
</reference>
<feature type="chain" id="PRO_0000119927" description="F-box only protein 34">
    <location>
        <begin position="1"/>
        <end position="695"/>
    </location>
</feature>
<feature type="domain" description="F-box" evidence="2">
    <location>
        <begin position="556"/>
        <end position="608"/>
    </location>
</feature>
<feature type="region of interest" description="Disordered" evidence="3">
    <location>
        <begin position="239"/>
        <end position="275"/>
    </location>
</feature>
<feature type="region of interest" description="Disordered" evidence="3">
    <location>
        <begin position="316"/>
        <end position="373"/>
    </location>
</feature>
<feature type="region of interest" description="Disordered" evidence="3">
    <location>
        <begin position="472"/>
        <end position="524"/>
    </location>
</feature>
<feature type="splice variant" id="VSP_013055" description="In isoform 2." evidence="4">
    <original>M</original>
    <variation>MGFGASVGLRRSALSSWSASVSGSESGLPPPHRAAAAPGQALARQKHRASV</variation>
    <location>
        <position position="1"/>
    </location>
</feature>
<feature type="sequence conflict" description="In Ref. 2; AAH48149." evidence="5" ref="2">
    <original>M</original>
    <variation>I</variation>
    <location>
        <position position="165"/>
    </location>
</feature>
<feature type="sequence conflict" description="In Ref. 1; BAB31968." evidence="5" ref="1">
    <original>K</original>
    <variation>E</variation>
    <location>
        <position position="236"/>
    </location>
</feature>
<feature type="sequence conflict" description="In Ref. 1; BAB31968." evidence="5" ref="1">
    <original>E</original>
    <variation>K</variation>
    <location>
        <position position="491"/>
    </location>
</feature>
<accession>Q80XI1</accession>
<accession>Q9D290</accession>
<proteinExistence type="evidence at transcript level"/>
<gene>
    <name type="primary">Fbxo34</name>
</gene>
<evidence type="ECO:0000250" key="1"/>
<evidence type="ECO:0000255" key="2">
    <source>
        <dbReference type="PROSITE-ProRule" id="PRU00080"/>
    </source>
</evidence>
<evidence type="ECO:0000256" key="3">
    <source>
        <dbReference type="SAM" id="MobiDB-lite"/>
    </source>
</evidence>
<evidence type="ECO:0000303" key="4">
    <source>
    </source>
</evidence>
<evidence type="ECO:0000305" key="5"/>